<comment type="subcellular location">
    <subcellularLocation>
        <location>Membrane</location>
        <topology>Multi-pass membrane protein</topology>
    </subcellularLocation>
</comment>
<comment type="tissue specificity">
    <text>Pineal gland.</text>
</comment>
<comment type="PTM">
    <text evidence="1">Phosphorylated on some or all of the serine and threonine residues present in the C-terminal region.</text>
</comment>
<comment type="similarity">
    <text evidence="3">Belongs to the G-protein coupled receptor 1 family. Opsin subfamily.</text>
</comment>
<keyword id="KW-0157">Chromophore</keyword>
<keyword id="KW-1015">Disulfide bond</keyword>
<keyword id="KW-0297">G-protein coupled receptor</keyword>
<keyword id="KW-0325">Glycoprotein</keyword>
<keyword id="KW-0449">Lipoprotein</keyword>
<keyword id="KW-0472">Membrane</keyword>
<keyword id="KW-0564">Palmitate</keyword>
<keyword id="KW-0597">Phosphoprotein</keyword>
<keyword id="KW-0600">Photoreceptor protein</keyword>
<keyword id="KW-0675">Receptor</keyword>
<keyword id="KW-0681">Retinal protein</keyword>
<keyword id="KW-0716">Sensory transduction</keyword>
<keyword id="KW-0807">Transducer</keyword>
<keyword id="KW-0812">Transmembrane</keyword>
<keyword id="KW-1133">Transmembrane helix</keyword>
<organism>
    <name type="scientific">Petromyzon marinus</name>
    <name type="common">Sea lamprey</name>
    <dbReference type="NCBI Taxonomy" id="7757"/>
    <lineage>
        <taxon>Eukaryota</taxon>
        <taxon>Metazoa</taxon>
        <taxon>Chordata</taxon>
        <taxon>Craniata</taxon>
        <taxon>Vertebrata</taxon>
        <taxon>Cyclostomata</taxon>
        <taxon>Hyperoartia</taxon>
        <taxon>Petromyzontiformes</taxon>
        <taxon>Petromyzontidae</taxon>
        <taxon>Petromyzon</taxon>
    </lineage>
</organism>
<reference key="1">
    <citation type="journal article" date="1997" name="Gene">
        <title>Cloning and characterization of the pineal gland-specific opsin gene of marine lamprey (Petromyzon marinus).</title>
        <authorList>
            <person name="Yokoyama S."/>
            <person name="Zhang H."/>
        </authorList>
    </citation>
    <scope>NUCLEOTIDE SEQUENCE [GENOMIC DNA]</scope>
</reference>
<sequence length="444" mass="48080">MDALQESPPSHHSLPSALPSATGGNGTVATMHNPFERPLEGIAPWNFTMLAALMGTITALSLGENFAVIVVTARFRQLRQPLNYVLVNLAAADLLVSAIGGSVSFFTNIKGYFFLGVHACVLEGFAVTYFGVVALWSLALLAFERYFVICRPLGNFRLQSKHAVLGLAVVWVFSLACTLPPVLGWSSYRPSMIGTTCEPNWYSGELHDHTFILMFFSTCFIFPLAVIFFSYGKLIQKLKKASETQRGLESTRRAEQQVTRMVVVMILAFLVCWMPYATFSIVVTACPTIHLDPLLAAVPAFFSKTATVYNPVIYIFMNKQFRDCFVQVLPCKGLKKVSATQTAGAQDTEHTASVNTQSPGNRHNIALAAGSLRFTGAVAPSPATGVVEPTMSAAGSMGAPPNKSTAPCQQQGQQQQQQGTPIPAITHVQPLLTHSESVSKICPV</sequence>
<dbReference type="EMBL" id="U90671">
    <property type="protein sequence ID" value="AAC41240.1"/>
    <property type="molecule type" value="Genomic_DNA"/>
</dbReference>
<dbReference type="EMBL" id="U90667">
    <property type="protein sequence ID" value="AAC41240.1"/>
    <property type="status" value="JOINED"/>
    <property type="molecule type" value="Genomic_DNA"/>
</dbReference>
<dbReference type="EMBL" id="U90668">
    <property type="protein sequence ID" value="AAC41240.1"/>
    <property type="status" value="JOINED"/>
    <property type="molecule type" value="Genomic_DNA"/>
</dbReference>
<dbReference type="EMBL" id="U90669">
    <property type="protein sequence ID" value="AAC41240.1"/>
    <property type="status" value="JOINED"/>
    <property type="molecule type" value="Genomic_DNA"/>
</dbReference>
<dbReference type="EMBL" id="U90670">
    <property type="protein sequence ID" value="AAC41240.1"/>
    <property type="status" value="JOINED"/>
    <property type="molecule type" value="Genomic_DNA"/>
</dbReference>
<dbReference type="SMR" id="O42490"/>
<dbReference type="STRING" id="7757.ENSPMAP00000008192"/>
<dbReference type="TreeFam" id="TF324998"/>
<dbReference type="Proteomes" id="UP001318040">
    <property type="component" value="Unplaced"/>
</dbReference>
<dbReference type="GO" id="GO:0016020">
    <property type="term" value="C:membrane"/>
    <property type="evidence" value="ECO:0007669"/>
    <property type="project" value="UniProtKB-SubCell"/>
</dbReference>
<dbReference type="GO" id="GO:0004930">
    <property type="term" value="F:G protein-coupled receptor activity"/>
    <property type="evidence" value="ECO:0007669"/>
    <property type="project" value="UniProtKB-KW"/>
</dbReference>
<dbReference type="GO" id="GO:0009881">
    <property type="term" value="F:photoreceptor activity"/>
    <property type="evidence" value="ECO:0007669"/>
    <property type="project" value="UniProtKB-KW"/>
</dbReference>
<dbReference type="GO" id="GO:0007602">
    <property type="term" value="P:phototransduction"/>
    <property type="evidence" value="ECO:0007669"/>
    <property type="project" value="UniProtKB-KW"/>
</dbReference>
<dbReference type="GO" id="GO:0007601">
    <property type="term" value="P:visual perception"/>
    <property type="evidence" value="ECO:0007669"/>
    <property type="project" value="InterPro"/>
</dbReference>
<dbReference type="CDD" id="cd15082">
    <property type="entry name" value="7tmA_VA_opsin"/>
    <property type="match status" value="1"/>
</dbReference>
<dbReference type="FunFam" id="1.20.1070.10:FF:000238">
    <property type="entry name" value="Opsin-VA"/>
    <property type="match status" value="1"/>
</dbReference>
<dbReference type="Gene3D" id="1.20.1070.10">
    <property type="entry name" value="Rhodopsin 7-helix transmembrane proteins"/>
    <property type="match status" value="1"/>
</dbReference>
<dbReference type="InterPro" id="IPR050125">
    <property type="entry name" value="GPCR_opsins"/>
</dbReference>
<dbReference type="InterPro" id="IPR000276">
    <property type="entry name" value="GPCR_Rhodpsn"/>
</dbReference>
<dbReference type="InterPro" id="IPR017452">
    <property type="entry name" value="GPCR_Rhodpsn_7TM"/>
</dbReference>
<dbReference type="InterPro" id="IPR001760">
    <property type="entry name" value="Opsin"/>
</dbReference>
<dbReference type="InterPro" id="IPR027430">
    <property type="entry name" value="Retinal_BS"/>
</dbReference>
<dbReference type="PANTHER" id="PTHR24240">
    <property type="entry name" value="OPSIN"/>
    <property type="match status" value="1"/>
</dbReference>
<dbReference type="Pfam" id="PF00001">
    <property type="entry name" value="7tm_1"/>
    <property type="match status" value="1"/>
</dbReference>
<dbReference type="PRINTS" id="PR00237">
    <property type="entry name" value="GPCRRHODOPSN"/>
</dbReference>
<dbReference type="PRINTS" id="PR00238">
    <property type="entry name" value="OPSIN"/>
</dbReference>
<dbReference type="SUPFAM" id="SSF81321">
    <property type="entry name" value="Family A G protein-coupled receptor-like"/>
    <property type="match status" value="1"/>
</dbReference>
<dbReference type="PROSITE" id="PS00237">
    <property type="entry name" value="G_PROTEIN_RECEP_F1_1"/>
    <property type="match status" value="1"/>
</dbReference>
<dbReference type="PROSITE" id="PS50262">
    <property type="entry name" value="G_PROTEIN_RECEP_F1_2"/>
    <property type="match status" value="1"/>
</dbReference>
<dbReference type="PROSITE" id="PS00238">
    <property type="entry name" value="OPSIN"/>
    <property type="match status" value="1"/>
</dbReference>
<proteinExistence type="evidence at protein level"/>
<protein>
    <recommendedName>
        <fullName>Pineal opsin</fullName>
    </recommendedName>
    <alternativeName>
        <fullName>Pineal gland-specific opsin</fullName>
        <shortName>P-opsin</shortName>
    </alternativeName>
</protein>
<accession>O42490</accession>
<name>OPSP_PETMA</name>
<evidence type="ECO:0000250" key="1"/>
<evidence type="ECO:0000255" key="2"/>
<evidence type="ECO:0000255" key="3">
    <source>
        <dbReference type="PROSITE-ProRule" id="PRU00521"/>
    </source>
</evidence>
<evidence type="ECO:0000256" key="4">
    <source>
        <dbReference type="SAM" id="MobiDB-lite"/>
    </source>
</evidence>
<feature type="chain" id="PRO_0000197810" description="Pineal opsin">
    <location>
        <begin position="1"/>
        <end position="444"/>
    </location>
</feature>
<feature type="topological domain" description="Extracellular">
    <location>
        <begin position="1"/>
        <end position="46"/>
    </location>
</feature>
<feature type="transmembrane region" description="Helical; Name=1" evidence="2">
    <location>
        <begin position="47"/>
        <end position="71"/>
    </location>
</feature>
<feature type="topological domain" description="Cytoplasmic">
    <location>
        <begin position="72"/>
        <end position="83"/>
    </location>
</feature>
<feature type="transmembrane region" description="Helical; Name=2" evidence="2">
    <location>
        <begin position="84"/>
        <end position="108"/>
    </location>
</feature>
<feature type="topological domain" description="Extracellular">
    <location>
        <begin position="109"/>
        <end position="123"/>
    </location>
</feature>
<feature type="transmembrane region" description="Helical; Name=3" evidence="2">
    <location>
        <begin position="124"/>
        <end position="143"/>
    </location>
</feature>
<feature type="topological domain" description="Cytoplasmic">
    <location>
        <begin position="144"/>
        <end position="162"/>
    </location>
</feature>
<feature type="transmembrane region" description="Helical; Name=4" evidence="2">
    <location>
        <begin position="163"/>
        <end position="186"/>
    </location>
</feature>
<feature type="topological domain" description="Extracellular">
    <location>
        <begin position="187"/>
        <end position="210"/>
    </location>
</feature>
<feature type="transmembrane region" description="Helical; Name=5" evidence="2">
    <location>
        <begin position="211"/>
        <end position="238"/>
    </location>
</feature>
<feature type="topological domain" description="Cytoplasmic">
    <location>
        <begin position="239"/>
        <end position="260"/>
    </location>
</feature>
<feature type="transmembrane region" description="Helical; Name=6" evidence="2">
    <location>
        <begin position="261"/>
        <end position="284"/>
    </location>
</feature>
<feature type="topological domain" description="Extracellular">
    <location>
        <begin position="285"/>
        <end position="292"/>
    </location>
</feature>
<feature type="transmembrane region" description="Helical; Name=7" evidence="2">
    <location>
        <begin position="293"/>
        <end position="317"/>
    </location>
</feature>
<feature type="topological domain" description="Cytoplasmic">
    <location>
        <begin position="318"/>
        <end position="444"/>
    </location>
</feature>
<feature type="region of interest" description="Disordered" evidence="4">
    <location>
        <begin position="1"/>
        <end position="20"/>
    </location>
</feature>
<feature type="region of interest" description="Disordered" evidence="4">
    <location>
        <begin position="341"/>
        <end position="360"/>
    </location>
</feature>
<feature type="region of interest" description="Disordered" evidence="4">
    <location>
        <begin position="388"/>
        <end position="420"/>
    </location>
</feature>
<feature type="compositionally biased region" description="Low complexity" evidence="4">
    <location>
        <begin position="7"/>
        <end position="20"/>
    </location>
</feature>
<feature type="compositionally biased region" description="Low complexity" evidence="4">
    <location>
        <begin position="409"/>
        <end position="419"/>
    </location>
</feature>
<feature type="modified residue" description="N6-(retinylidene)lysine">
    <location>
        <position position="304"/>
    </location>
</feature>
<feature type="lipid moiety-binding region" description="S-palmitoyl cysteine" evidence="1">
    <location>
        <position position="331"/>
    </location>
</feature>
<feature type="glycosylation site" description="N-linked (GlcNAc...) asparagine" evidence="2">
    <location>
        <position position="25"/>
    </location>
</feature>
<feature type="disulfide bond" evidence="3">
    <location>
        <begin position="120"/>
        <end position="197"/>
    </location>
</feature>